<reference key="1">
    <citation type="journal article" date="2008" name="Genome Res.">
        <title>Comparative genome analysis of Salmonella enteritidis PT4 and Salmonella gallinarum 287/91 provides insights into evolutionary and host adaptation pathways.</title>
        <authorList>
            <person name="Thomson N.R."/>
            <person name="Clayton D.J."/>
            <person name="Windhorst D."/>
            <person name="Vernikos G."/>
            <person name="Davidson S."/>
            <person name="Churcher C."/>
            <person name="Quail M.A."/>
            <person name="Stevens M."/>
            <person name="Jones M.A."/>
            <person name="Watson M."/>
            <person name="Barron A."/>
            <person name="Layton A."/>
            <person name="Pickard D."/>
            <person name="Kingsley R.A."/>
            <person name="Bignell A."/>
            <person name="Clark L."/>
            <person name="Harris B."/>
            <person name="Ormond D."/>
            <person name="Abdellah Z."/>
            <person name="Brooks K."/>
            <person name="Cherevach I."/>
            <person name="Chillingworth T."/>
            <person name="Woodward J."/>
            <person name="Norberczak H."/>
            <person name="Lord A."/>
            <person name="Arrowsmith C."/>
            <person name="Jagels K."/>
            <person name="Moule S."/>
            <person name="Mungall K."/>
            <person name="Saunders M."/>
            <person name="Whitehead S."/>
            <person name="Chabalgoity J.A."/>
            <person name="Maskell D."/>
            <person name="Humphreys T."/>
            <person name="Roberts M."/>
            <person name="Barrow P.A."/>
            <person name="Dougan G."/>
            <person name="Parkhill J."/>
        </authorList>
    </citation>
    <scope>NUCLEOTIDE SEQUENCE [LARGE SCALE GENOMIC DNA]</scope>
    <source>
        <strain>287/91 / NCTC 13346</strain>
    </source>
</reference>
<feature type="chain" id="PRO_1000098119" description="Serine--tRNA ligase">
    <location>
        <begin position="1"/>
        <end position="430"/>
    </location>
</feature>
<feature type="binding site" evidence="1">
    <location>
        <begin position="237"/>
        <end position="239"/>
    </location>
    <ligand>
        <name>L-serine</name>
        <dbReference type="ChEBI" id="CHEBI:33384"/>
    </ligand>
</feature>
<feature type="binding site" evidence="1">
    <location>
        <begin position="268"/>
        <end position="270"/>
    </location>
    <ligand>
        <name>ATP</name>
        <dbReference type="ChEBI" id="CHEBI:30616"/>
    </ligand>
</feature>
<feature type="binding site" evidence="1">
    <location>
        <position position="291"/>
    </location>
    <ligand>
        <name>L-serine</name>
        <dbReference type="ChEBI" id="CHEBI:33384"/>
    </ligand>
</feature>
<feature type="binding site" evidence="1">
    <location>
        <begin position="355"/>
        <end position="358"/>
    </location>
    <ligand>
        <name>ATP</name>
        <dbReference type="ChEBI" id="CHEBI:30616"/>
    </ligand>
</feature>
<feature type="binding site" evidence="1">
    <location>
        <position position="391"/>
    </location>
    <ligand>
        <name>L-serine</name>
        <dbReference type="ChEBI" id="CHEBI:33384"/>
    </ligand>
</feature>
<gene>
    <name evidence="1" type="primary">serS</name>
    <name type="ordered locus">SG0906</name>
</gene>
<organism>
    <name type="scientific">Salmonella gallinarum (strain 287/91 / NCTC 13346)</name>
    <dbReference type="NCBI Taxonomy" id="550538"/>
    <lineage>
        <taxon>Bacteria</taxon>
        <taxon>Pseudomonadati</taxon>
        <taxon>Pseudomonadota</taxon>
        <taxon>Gammaproteobacteria</taxon>
        <taxon>Enterobacterales</taxon>
        <taxon>Enterobacteriaceae</taxon>
        <taxon>Salmonella</taxon>
    </lineage>
</organism>
<dbReference type="EC" id="6.1.1.11" evidence="1"/>
<dbReference type="EMBL" id="AM933173">
    <property type="protein sequence ID" value="CAR36796.1"/>
    <property type="molecule type" value="Genomic_DNA"/>
</dbReference>
<dbReference type="RefSeq" id="WP_000886697.1">
    <property type="nucleotide sequence ID" value="NC_011274.1"/>
</dbReference>
<dbReference type="SMR" id="B5R8I1"/>
<dbReference type="KEGG" id="seg:SG0906"/>
<dbReference type="HOGENOM" id="CLU_023797_1_1_6"/>
<dbReference type="UniPathway" id="UPA00906">
    <property type="reaction ID" value="UER00895"/>
</dbReference>
<dbReference type="Proteomes" id="UP000008321">
    <property type="component" value="Chromosome"/>
</dbReference>
<dbReference type="GO" id="GO:0005737">
    <property type="term" value="C:cytoplasm"/>
    <property type="evidence" value="ECO:0007669"/>
    <property type="project" value="UniProtKB-SubCell"/>
</dbReference>
<dbReference type="GO" id="GO:0005524">
    <property type="term" value="F:ATP binding"/>
    <property type="evidence" value="ECO:0007669"/>
    <property type="project" value="UniProtKB-UniRule"/>
</dbReference>
<dbReference type="GO" id="GO:0004828">
    <property type="term" value="F:serine-tRNA ligase activity"/>
    <property type="evidence" value="ECO:0007669"/>
    <property type="project" value="UniProtKB-UniRule"/>
</dbReference>
<dbReference type="GO" id="GO:0016260">
    <property type="term" value="P:selenocysteine biosynthetic process"/>
    <property type="evidence" value="ECO:0007669"/>
    <property type="project" value="UniProtKB-UniRule"/>
</dbReference>
<dbReference type="GO" id="GO:0006434">
    <property type="term" value="P:seryl-tRNA aminoacylation"/>
    <property type="evidence" value="ECO:0007669"/>
    <property type="project" value="UniProtKB-UniRule"/>
</dbReference>
<dbReference type="CDD" id="cd00770">
    <property type="entry name" value="SerRS_core"/>
    <property type="match status" value="1"/>
</dbReference>
<dbReference type="FunFam" id="1.10.287.40:FF:000001">
    <property type="entry name" value="Serine--tRNA ligase"/>
    <property type="match status" value="1"/>
</dbReference>
<dbReference type="FunFam" id="3.30.930.10:FF:000018">
    <property type="entry name" value="Serine--tRNA ligase"/>
    <property type="match status" value="1"/>
</dbReference>
<dbReference type="Gene3D" id="3.30.930.10">
    <property type="entry name" value="Bira Bifunctional Protein, Domain 2"/>
    <property type="match status" value="1"/>
</dbReference>
<dbReference type="Gene3D" id="1.10.287.40">
    <property type="entry name" value="Serine-tRNA synthetase, tRNA binding domain"/>
    <property type="match status" value="1"/>
</dbReference>
<dbReference type="HAMAP" id="MF_00176">
    <property type="entry name" value="Ser_tRNA_synth_type1"/>
    <property type="match status" value="1"/>
</dbReference>
<dbReference type="InterPro" id="IPR002314">
    <property type="entry name" value="aa-tRNA-synt_IIb"/>
</dbReference>
<dbReference type="InterPro" id="IPR006195">
    <property type="entry name" value="aa-tRNA-synth_II"/>
</dbReference>
<dbReference type="InterPro" id="IPR045864">
    <property type="entry name" value="aa-tRNA-synth_II/BPL/LPL"/>
</dbReference>
<dbReference type="InterPro" id="IPR002317">
    <property type="entry name" value="Ser-tRNA-ligase_type_1"/>
</dbReference>
<dbReference type="InterPro" id="IPR015866">
    <property type="entry name" value="Ser-tRNA-synth_1_N"/>
</dbReference>
<dbReference type="InterPro" id="IPR042103">
    <property type="entry name" value="SerRS_1_N_sf"/>
</dbReference>
<dbReference type="InterPro" id="IPR033729">
    <property type="entry name" value="SerRS_core"/>
</dbReference>
<dbReference type="InterPro" id="IPR010978">
    <property type="entry name" value="tRNA-bd_arm"/>
</dbReference>
<dbReference type="NCBIfam" id="TIGR00414">
    <property type="entry name" value="serS"/>
    <property type="match status" value="1"/>
</dbReference>
<dbReference type="PANTHER" id="PTHR43697:SF1">
    <property type="entry name" value="SERINE--TRNA LIGASE"/>
    <property type="match status" value="1"/>
</dbReference>
<dbReference type="PANTHER" id="PTHR43697">
    <property type="entry name" value="SERYL-TRNA SYNTHETASE"/>
    <property type="match status" value="1"/>
</dbReference>
<dbReference type="Pfam" id="PF02403">
    <property type="entry name" value="Seryl_tRNA_N"/>
    <property type="match status" value="1"/>
</dbReference>
<dbReference type="Pfam" id="PF00587">
    <property type="entry name" value="tRNA-synt_2b"/>
    <property type="match status" value="1"/>
</dbReference>
<dbReference type="PIRSF" id="PIRSF001529">
    <property type="entry name" value="Ser-tRNA-synth_IIa"/>
    <property type="match status" value="1"/>
</dbReference>
<dbReference type="PRINTS" id="PR00981">
    <property type="entry name" value="TRNASYNTHSER"/>
</dbReference>
<dbReference type="SUPFAM" id="SSF55681">
    <property type="entry name" value="Class II aaRS and biotin synthetases"/>
    <property type="match status" value="1"/>
</dbReference>
<dbReference type="SUPFAM" id="SSF46589">
    <property type="entry name" value="tRNA-binding arm"/>
    <property type="match status" value="1"/>
</dbReference>
<dbReference type="PROSITE" id="PS50862">
    <property type="entry name" value="AA_TRNA_LIGASE_II"/>
    <property type="match status" value="1"/>
</dbReference>
<keyword id="KW-0030">Aminoacyl-tRNA synthetase</keyword>
<keyword id="KW-0067">ATP-binding</keyword>
<keyword id="KW-0963">Cytoplasm</keyword>
<keyword id="KW-0436">Ligase</keyword>
<keyword id="KW-0547">Nucleotide-binding</keyword>
<keyword id="KW-0648">Protein biosynthesis</keyword>
<name>SYS_SALG2</name>
<proteinExistence type="inferred from homology"/>
<accession>B5R8I1</accession>
<evidence type="ECO:0000255" key="1">
    <source>
        <dbReference type="HAMAP-Rule" id="MF_00176"/>
    </source>
</evidence>
<comment type="function">
    <text evidence="1">Catalyzes the attachment of serine to tRNA(Ser). Is also able to aminoacylate tRNA(Sec) with serine, to form the misacylated tRNA L-seryl-tRNA(Sec), which will be further converted into selenocysteinyl-tRNA(Sec).</text>
</comment>
<comment type="catalytic activity">
    <reaction evidence="1">
        <text>tRNA(Ser) + L-serine + ATP = L-seryl-tRNA(Ser) + AMP + diphosphate + H(+)</text>
        <dbReference type="Rhea" id="RHEA:12292"/>
        <dbReference type="Rhea" id="RHEA-COMP:9669"/>
        <dbReference type="Rhea" id="RHEA-COMP:9703"/>
        <dbReference type="ChEBI" id="CHEBI:15378"/>
        <dbReference type="ChEBI" id="CHEBI:30616"/>
        <dbReference type="ChEBI" id="CHEBI:33019"/>
        <dbReference type="ChEBI" id="CHEBI:33384"/>
        <dbReference type="ChEBI" id="CHEBI:78442"/>
        <dbReference type="ChEBI" id="CHEBI:78533"/>
        <dbReference type="ChEBI" id="CHEBI:456215"/>
        <dbReference type="EC" id="6.1.1.11"/>
    </reaction>
</comment>
<comment type="catalytic activity">
    <reaction evidence="1">
        <text>tRNA(Sec) + L-serine + ATP = L-seryl-tRNA(Sec) + AMP + diphosphate + H(+)</text>
        <dbReference type="Rhea" id="RHEA:42580"/>
        <dbReference type="Rhea" id="RHEA-COMP:9742"/>
        <dbReference type="Rhea" id="RHEA-COMP:10128"/>
        <dbReference type="ChEBI" id="CHEBI:15378"/>
        <dbReference type="ChEBI" id="CHEBI:30616"/>
        <dbReference type="ChEBI" id="CHEBI:33019"/>
        <dbReference type="ChEBI" id="CHEBI:33384"/>
        <dbReference type="ChEBI" id="CHEBI:78442"/>
        <dbReference type="ChEBI" id="CHEBI:78533"/>
        <dbReference type="ChEBI" id="CHEBI:456215"/>
        <dbReference type="EC" id="6.1.1.11"/>
    </reaction>
</comment>
<comment type="pathway">
    <text evidence="1">Aminoacyl-tRNA biosynthesis; selenocysteinyl-tRNA(Sec) biosynthesis; L-seryl-tRNA(Sec) from L-serine and tRNA(Sec): step 1/1.</text>
</comment>
<comment type="subunit">
    <text evidence="1">Homodimer. The tRNA molecule binds across the dimer.</text>
</comment>
<comment type="subcellular location">
    <subcellularLocation>
        <location evidence="1">Cytoplasm</location>
    </subcellularLocation>
</comment>
<comment type="domain">
    <text evidence="1">Consists of two distinct domains, a catalytic core and a N-terminal extension that is involved in tRNA binding.</text>
</comment>
<comment type="similarity">
    <text evidence="1">Belongs to the class-II aminoacyl-tRNA synthetase family. Type-1 seryl-tRNA synthetase subfamily.</text>
</comment>
<protein>
    <recommendedName>
        <fullName evidence="1">Serine--tRNA ligase</fullName>
        <ecNumber evidence="1">6.1.1.11</ecNumber>
    </recommendedName>
    <alternativeName>
        <fullName evidence="1">Seryl-tRNA synthetase</fullName>
        <shortName evidence="1">SerRS</shortName>
    </alternativeName>
    <alternativeName>
        <fullName evidence="1">Seryl-tRNA(Ser/Sec) synthetase</fullName>
    </alternativeName>
</protein>
<sequence>MLDPNLLRNEPDAVAEKLARRGFKLDVDKLRALEERRKVLQVNTENLQAERNSRSKSIGQAKARGEDIEPLRLEVNKLGEELDAAKAELDTLLAEIRDIALTIPNLPADEVPVGKDENDNVEVSRWGTPREFDFEIRDHVTLGEMHSGLDFAAAVKLTGSRFVVMKGQIARMHRALSQFMLDLHTEQHGYSENYVPYLVNHDTLYGTGQLPKFAGDLFHTRPLEEEADSSNYALIPTAEVPLTNLVRDEIIDEDQLPIKMTAHTPCFRSEAGSYGRDTRGLIRMHQFDKVEMVQIVRPEDSMAALEEMTGHAEKVLQLLGLPYRKIILCTGDMGFGACKTYDLEVWVPAQNTYREISSCSNVWDFQARRMQARCRSKSDKKTRLVHTLNGSGLAVGRTLVAVMENYQQADGRIEVPEVLRPYMNGLEYIG</sequence>